<proteinExistence type="inferred from homology"/>
<organismHost>
    <name type="scientific">Homo sapiens</name>
    <name type="common">Human</name>
    <dbReference type="NCBI Taxonomy" id="9606"/>
</organismHost>
<sequence>MDVLYSLSKTLKDARDKIVEGTLYSNVSDLIQQFNQMLITMNGNEFQTGGIGNLPVRNWNFDFGLLGTTLLNLDANYVETARNTIDYFVDFVDNVCIDEMVRESQRNGIAPQSDSLRKLSGIKFKRINFDNSSEYIENWNLQNRRQRTGFTFHKPNIFPYSASFTLNRSQPAHDNLMGTMWLNAGSEIQVAGFDYSCAINAPANTQQFEHVVQLRRVLTTATITLLPDAERFSFPRVVNSADGATTWYFNPVILRPNNVEVEFLLNGQIINTYQARFGTIIARNFDTIRLSFQLMRPPNMTPAVAALFPNAQPFEHHATVGLTLRIESAICESVLADASETMLANVTSVRQEYAIPVGPVFPPGMNWTDLITNYSPSREDNLQRVFTVASIRSMLVK</sequence>
<keyword id="KW-0106">Calcium</keyword>
<keyword id="KW-0167">Capsid protein</keyword>
<keyword id="KW-1154">Intermediate capsid protein</keyword>
<keyword id="KW-0479">Metal-binding</keyword>
<keyword id="KW-0832">Ubl conjugation</keyword>
<keyword id="KW-0946">Virion</keyword>
<keyword id="KW-0862">Zinc</keyword>
<organism>
    <name type="scientific">Rotavirus A (isolate RVA/Human/Belgium/B4106/2000/G3P11[14])</name>
    <name type="common">RV-A</name>
    <name type="synonym">Rotavirus A (isolate B4106)</name>
    <dbReference type="NCBI Taxonomy" id="578843"/>
    <lineage>
        <taxon>Viruses</taxon>
        <taxon>Riboviria</taxon>
        <taxon>Orthornavirae</taxon>
        <taxon>Duplornaviricota</taxon>
        <taxon>Resentoviricetes</taxon>
        <taxon>Reovirales</taxon>
        <taxon>Sedoreoviridae</taxon>
        <taxon>Rotavirus</taxon>
        <taxon>Rotavirus A</taxon>
    </lineage>
</organism>
<dbReference type="EMBL" id="AY740737">
    <property type="protein sequence ID" value="AAU43795.1"/>
    <property type="molecule type" value="Genomic_RNA"/>
</dbReference>
<dbReference type="SMR" id="Q3ZK59"/>
<dbReference type="Proteomes" id="UP000008655">
    <property type="component" value="Genome"/>
</dbReference>
<dbReference type="GO" id="GO:0019031">
    <property type="term" value="C:viral envelope"/>
    <property type="evidence" value="ECO:0007669"/>
    <property type="project" value="UniProtKB-UniRule"/>
</dbReference>
<dbReference type="GO" id="GO:0039626">
    <property type="term" value="C:viral intermediate capsid"/>
    <property type="evidence" value="ECO:0007669"/>
    <property type="project" value="UniProtKB-UniRule"/>
</dbReference>
<dbReference type="GO" id="GO:0046789">
    <property type="term" value="F:host cell surface receptor binding"/>
    <property type="evidence" value="ECO:0007669"/>
    <property type="project" value="UniProtKB-UniRule"/>
</dbReference>
<dbReference type="GO" id="GO:0046872">
    <property type="term" value="F:metal ion binding"/>
    <property type="evidence" value="ECO:0007669"/>
    <property type="project" value="UniProtKB-UniRule"/>
</dbReference>
<dbReference type="GO" id="GO:0005198">
    <property type="term" value="F:structural molecule activity"/>
    <property type="evidence" value="ECO:0007669"/>
    <property type="project" value="UniProtKB-UniRule"/>
</dbReference>
<dbReference type="GO" id="GO:0019064">
    <property type="term" value="P:fusion of virus membrane with host plasma membrane"/>
    <property type="evidence" value="ECO:0007669"/>
    <property type="project" value="UniProtKB-UniRule"/>
</dbReference>
<dbReference type="FunFam" id="2.60.120.170:FF:000001">
    <property type="entry name" value="Intermediate capsid protein VP6"/>
    <property type="match status" value="1"/>
</dbReference>
<dbReference type="Gene3D" id="2.60.120.170">
    <property type="match status" value="1"/>
</dbReference>
<dbReference type="Gene3D" id="1.10.1350.10">
    <property type="entry name" value="Viral capsid alpha domain"/>
    <property type="match status" value="1"/>
</dbReference>
<dbReference type="HAMAP" id="MF_04126">
    <property type="entry name" value="Rota_VP6"/>
    <property type="match status" value="1"/>
</dbReference>
<dbReference type="HAMAP" id="MF_04129">
    <property type="entry name" value="Rota_VP6_A"/>
    <property type="match status" value="1"/>
</dbReference>
<dbReference type="InterPro" id="IPR008980">
    <property type="entry name" value="Capsid_hemagglutn"/>
</dbReference>
<dbReference type="InterPro" id="IPR001385">
    <property type="entry name" value="Rotavirus_A/C_VP6"/>
</dbReference>
<dbReference type="InterPro" id="IPR008935">
    <property type="entry name" value="Virus_capsid_a-hlx_vir"/>
</dbReference>
<dbReference type="Pfam" id="PF00980">
    <property type="entry name" value="Rota_Capsid_VP6"/>
    <property type="match status" value="1"/>
</dbReference>
<dbReference type="SUPFAM" id="SSF48345">
    <property type="entry name" value="A virus capsid protein alpha-helical domain"/>
    <property type="match status" value="1"/>
</dbReference>
<dbReference type="SUPFAM" id="SSF49818">
    <property type="entry name" value="Viral protein domain"/>
    <property type="match status" value="1"/>
</dbReference>
<comment type="function">
    <text evidence="1">Intermediate capsid protein that self assembles to form an icosahedral capsid with a T=13 symmetry, which consists of 230 trimers of VP6, with channels at each of its five-fold vertices. This capsid constitutes the middle concentric layer of the viral mature particle. The innermost VP2 capsid and the intermediate VP6 capsid remain intact following cell entry to protect the dsRNA from degradation and to prevent unfavorable antiviral responses in the host cell during all the replication cycle of the virus. Nascent transcripts are transcribed within the structural confines of this double-layered particle (DLP) and are extruded through the channels at the five-fold axes. VP6 is required for the transcription activity of the DLP.</text>
</comment>
<comment type="subunit">
    <text evidence="1">Homotrimer. Interacts with the inner capsid protein VP2. Interacts with the outer capsid glycoprotein VP7. Interacts with the outer capsid protein VP5*.</text>
</comment>
<comment type="subcellular location">
    <subcellularLocation>
        <location evidence="1">Virion</location>
    </subcellularLocation>
    <text evidence="1">Component of the intermediate capsid. Also found in spherical cytoplasmic structures, called virus factories, that appear early after infection and are the site of viral replication and packaging.</text>
</comment>
<comment type="PTM">
    <text evidence="1">The N-terminus is blocked.</text>
</comment>
<comment type="PTM">
    <text evidence="1">Sumoylated with SUMO1 and SUMO2. Sumoylation of viral proteins seems to have a positive role on viral replication.</text>
</comment>
<comment type="miscellaneous">
    <text evidence="1">The VP6 trimer contains a zinc ion located at the center of the molecule. The zinc ion is not essential for either trimerization or transcription activity of the DLP. Zinc-depleted VP6 has an increased sensitivity to proteases.</text>
</comment>
<comment type="similarity">
    <text evidence="1">Belongs to the rotavirus VP6 family.</text>
</comment>
<evidence type="ECO:0000255" key="1">
    <source>
        <dbReference type="HAMAP-Rule" id="MF_04129"/>
    </source>
</evidence>
<protein>
    <recommendedName>
        <fullName evidence="1">Intermediate capsid protein VP6</fullName>
    </recommendedName>
</protein>
<accession>Q3ZK59</accession>
<name>VP6_ROT41</name>
<feature type="chain" id="PRO_0000368164" description="Intermediate capsid protein VP6">
    <location>
        <begin position="1"/>
        <end position="397"/>
    </location>
</feature>
<feature type="region of interest" description="Interaction with the inner capsid protein VP2" evidence="1">
    <location>
        <begin position="62"/>
        <end position="73"/>
    </location>
</feature>
<feature type="binding site" evidence="1">
    <location>
        <position position="153"/>
    </location>
    <ligand>
        <name>Zn(2+)</name>
        <dbReference type="ChEBI" id="CHEBI:29105"/>
        <note>ligand shared between all trimeric partners</note>
    </ligand>
</feature>
<feature type="binding site" evidence="1">
    <location>
        <position position="266"/>
    </location>
    <ligand>
        <name>Ca(2+)</name>
        <dbReference type="ChEBI" id="CHEBI:29108"/>
    </ligand>
</feature>
<feature type="binding site" evidence="1">
    <location>
        <position position="286"/>
    </location>
    <ligand>
        <name>Ca(2+)</name>
        <dbReference type="ChEBI" id="CHEBI:29108"/>
    </ligand>
</feature>
<reference key="1">
    <citation type="journal article" date="2006" name="J. Virol.">
        <title>Full genomic analysis of human rotavirus strain B4106 and lapine rotavirus strain 30/96 provides evidence for interspecies transmission.</title>
        <authorList>
            <person name="Matthijnssens J."/>
            <person name="Rahman M."/>
            <person name="Martella V."/>
            <person name="Xuelei Y."/>
            <person name="De Vos S."/>
            <person name="De Leener K."/>
            <person name="Ciarlet M."/>
            <person name="Buonavoglia C."/>
            <person name="Van Ranst M."/>
        </authorList>
    </citation>
    <scope>NUCLEOTIDE SEQUENCE [GENOMIC RNA]</scope>
</reference>